<protein>
    <recommendedName>
        <fullName evidence="1">Probable GTP-binding protein EngB</fullName>
    </recommendedName>
</protein>
<comment type="function">
    <text evidence="1">Necessary for normal cell division and for the maintenance of normal septation.</text>
</comment>
<comment type="cofactor">
    <cofactor evidence="1">
        <name>Mg(2+)</name>
        <dbReference type="ChEBI" id="CHEBI:18420"/>
    </cofactor>
</comment>
<comment type="similarity">
    <text evidence="1">Belongs to the TRAFAC class TrmE-Era-EngA-EngB-Septin-like GTPase superfamily. EngB GTPase family.</text>
</comment>
<comment type="sequence caution" evidence="2">
    <conflict type="erroneous initiation">
        <sequence resource="EMBL-CDS" id="AAW70945"/>
    </conflict>
</comment>
<proteinExistence type="inferred from homology"/>
<accession>Q5GSS9</accession>
<dbReference type="EMBL" id="AE017321">
    <property type="protein sequence ID" value="AAW70945.1"/>
    <property type="status" value="ALT_INIT"/>
    <property type="molecule type" value="Genomic_DNA"/>
</dbReference>
<dbReference type="RefSeq" id="WP_041571449.1">
    <property type="nucleotide sequence ID" value="NC_006833.1"/>
</dbReference>
<dbReference type="SMR" id="Q5GSS9"/>
<dbReference type="STRING" id="292805.Wbm0357"/>
<dbReference type="KEGG" id="wbm:Wbm0357"/>
<dbReference type="eggNOG" id="COG0218">
    <property type="taxonomic scope" value="Bacteria"/>
</dbReference>
<dbReference type="HOGENOM" id="CLU_033732_2_0_5"/>
<dbReference type="Proteomes" id="UP000000534">
    <property type="component" value="Chromosome"/>
</dbReference>
<dbReference type="GO" id="GO:0005525">
    <property type="term" value="F:GTP binding"/>
    <property type="evidence" value="ECO:0007669"/>
    <property type="project" value="UniProtKB-UniRule"/>
</dbReference>
<dbReference type="GO" id="GO:0046872">
    <property type="term" value="F:metal ion binding"/>
    <property type="evidence" value="ECO:0007669"/>
    <property type="project" value="UniProtKB-KW"/>
</dbReference>
<dbReference type="GO" id="GO:0000917">
    <property type="term" value="P:division septum assembly"/>
    <property type="evidence" value="ECO:0007669"/>
    <property type="project" value="UniProtKB-KW"/>
</dbReference>
<dbReference type="CDD" id="cd01876">
    <property type="entry name" value="YihA_EngB"/>
    <property type="match status" value="1"/>
</dbReference>
<dbReference type="Gene3D" id="3.40.50.300">
    <property type="entry name" value="P-loop containing nucleotide triphosphate hydrolases"/>
    <property type="match status" value="1"/>
</dbReference>
<dbReference type="HAMAP" id="MF_00321">
    <property type="entry name" value="GTPase_EngB"/>
    <property type="match status" value="1"/>
</dbReference>
<dbReference type="InterPro" id="IPR030393">
    <property type="entry name" value="G_ENGB_dom"/>
</dbReference>
<dbReference type="InterPro" id="IPR006073">
    <property type="entry name" value="GTP-bd"/>
</dbReference>
<dbReference type="InterPro" id="IPR019987">
    <property type="entry name" value="GTP-bd_ribosome_bio_YsxC"/>
</dbReference>
<dbReference type="InterPro" id="IPR027417">
    <property type="entry name" value="P-loop_NTPase"/>
</dbReference>
<dbReference type="NCBIfam" id="TIGR03598">
    <property type="entry name" value="GTPase_YsxC"/>
    <property type="match status" value="1"/>
</dbReference>
<dbReference type="PANTHER" id="PTHR11649:SF13">
    <property type="entry name" value="ENGB-TYPE G DOMAIN-CONTAINING PROTEIN"/>
    <property type="match status" value="1"/>
</dbReference>
<dbReference type="PANTHER" id="PTHR11649">
    <property type="entry name" value="MSS1/TRME-RELATED GTP-BINDING PROTEIN"/>
    <property type="match status" value="1"/>
</dbReference>
<dbReference type="Pfam" id="PF01926">
    <property type="entry name" value="MMR_HSR1"/>
    <property type="match status" value="1"/>
</dbReference>
<dbReference type="SUPFAM" id="SSF52540">
    <property type="entry name" value="P-loop containing nucleoside triphosphate hydrolases"/>
    <property type="match status" value="1"/>
</dbReference>
<dbReference type="PROSITE" id="PS51706">
    <property type="entry name" value="G_ENGB"/>
    <property type="match status" value="1"/>
</dbReference>
<keyword id="KW-0131">Cell cycle</keyword>
<keyword id="KW-0132">Cell division</keyword>
<keyword id="KW-0342">GTP-binding</keyword>
<keyword id="KW-0460">Magnesium</keyword>
<keyword id="KW-0479">Metal-binding</keyword>
<keyword id="KW-0547">Nucleotide-binding</keyword>
<keyword id="KW-1185">Reference proteome</keyword>
<keyword id="KW-0717">Septation</keyword>
<name>ENGB_WOLTR</name>
<sequence>MVRRITLNSNFMFGASDIKSLPNESAPEIAFAGRSNVGKSSLINLLINSKKAARVSSKPGCTRQINFYSMYNDKFRLVDLPGYGCSHASKDETIQYLGLVEYYLIHRRNLRRVFVLIDSKVRLKEIDKDFIYWLTYNNINFDVVLTKIDKVDRENLDAIIESTRKWINNESVSIRQISVRVKYEMTKVRDEFFKFTR</sequence>
<feature type="chain" id="PRO_0000266979" description="Probable GTP-binding protein EngB">
    <location>
        <begin position="1"/>
        <end position="197"/>
    </location>
</feature>
<feature type="domain" description="EngB-type G" evidence="1">
    <location>
        <begin position="25"/>
        <end position="197"/>
    </location>
</feature>
<feature type="binding site" evidence="1">
    <location>
        <begin position="33"/>
        <end position="40"/>
    </location>
    <ligand>
        <name>GTP</name>
        <dbReference type="ChEBI" id="CHEBI:37565"/>
    </ligand>
</feature>
<feature type="binding site" evidence="1">
    <location>
        <position position="40"/>
    </location>
    <ligand>
        <name>Mg(2+)</name>
        <dbReference type="ChEBI" id="CHEBI:18420"/>
    </ligand>
</feature>
<feature type="binding site" evidence="1">
    <location>
        <begin position="60"/>
        <end position="64"/>
    </location>
    <ligand>
        <name>GTP</name>
        <dbReference type="ChEBI" id="CHEBI:37565"/>
    </ligand>
</feature>
<feature type="binding site" evidence="1">
    <location>
        <position position="62"/>
    </location>
    <ligand>
        <name>Mg(2+)</name>
        <dbReference type="ChEBI" id="CHEBI:18420"/>
    </ligand>
</feature>
<feature type="binding site" evidence="1">
    <location>
        <begin position="79"/>
        <end position="82"/>
    </location>
    <ligand>
        <name>GTP</name>
        <dbReference type="ChEBI" id="CHEBI:37565"/>
    </ligand>
</feature>
<feature type="binding site" evidence="1">
    <location>
        <begin position="146"/>
        <end position="149"/>
    </location>
    <ligand>
        <name>GTP</name>
        <dbReference type="ChEBI" id="CHEBI:37565"/>
    </ligand>
</feature>
<feature type="binding site" evidence="1">
    <location>
        <begin position="177"/>
        <end position="179"/>
    </location>
    <ligand>
        <name>GTP</name>
        <dbReference type="ChEBI" id="CHEBI:37565"/>
    </ligand>
</feature>
<evidence type="ECO:0000255" key="1">
    <source>
        <dbReference type="HAMAP-Rule" id="MF_00321"/>
    </source>
</evidence>
<evidence type="ECO:0000305" key="2"/>
<organism>
    <name type="scientific">Wolbachia sp. subsp. Brugia malayi (strain TRS)</name>
    <dbReference type="NCBI Taxonomy" id="292805"/>
    <lineage>
        <taxon>Bacteria</taxon>
        <taxon>Pseudomonadati</taxon>
        <taxon>Pseudomonadota</taxon>
        <taxon>Alphaproteobacteria</taxon>
        <taxon>Rickettsiales</taxon>
        <taxon>Anaplasmataceae</taxon>
        <taxon>Wolbachieae</taxon>
        <taxon>Wolbachia</taxon>
    </lineage>
</organism>
<gene>
    <name evidence="1" type="primary">engB</name>
    <name type="ordered locus">Wbm0357</name>
</gene>
<reference key="1">
    <citation type="journal article" date="2005" name="PLoS Biol.">
        <title>The Wolbachia genome of Brugia malayi: endosymbiont evolution within a human pathogenic nematode.</title>
        <authorList>
            <person name="Foster J."/>
            <person name="Ganatra M."/>
            <person name="Kamal I."/>
            <person name="Ware J."/>
            <person name="Makarova K."/>
            <person name="Ivanova N."/>
            <person name="Bhattacharyya A."/>
            <person name="Kapatral V."/>
            <person name="Kumar S."/>
            <person name="Posfai J."/>
            <person name="Vincze T."/>
            <person name="Ingram J."/>
            <person name="Moran L."/>
            <person name="Lapidus A."/>
            <person name="Omelchenko M."/>
            <person name="Kyrpides N."/>
            <person name="Ghedin E."/>
            <person name="Wang S."/>
            <person name="Goltsman E."/>
            <person name="Joukov V."/>
            <person name="Ostrovskaya O."/>
            <person name="Tsukerman K."/>
            <person name="Mazur M."/>
            <person name="Comb D."/>
            <person name="Koonin E."/>
            <person name="Slatko B."/>
        </authorList>
    </citation>
    <scope>NUCLEOTIDE SEQUENCE [LARGE SCALE GENOMIC DNA]</scope>
    <source>
        <strain>TRS</strain>
    </source>
</reference>